<reference key="1">
    <citation type="journal article" date="2002" name="Nature">
        <title>The genome sequence of Schizosaccharomyces pombe.</title>
        <authorList>
            <person name="Wood V."/>
            <person name="Gwilliam R."/>
            <person name="Rajandream M.A."/>
            <person name="Lyne M.H."/>
            <person name="Lyne R."/>
            <person name="Stewart A."/>
            <person name="Sgouros J.G."/>
            <person name="Peat N."/>
            <person name="Hayles J."/>
            <person name="Baker S.G."/>
            <person name="Basham D."/>
            <person name="Bowman S."/>
            <person name="Brooks K."/>
            <person name="Brown D."/>
            <person name="Brown S."/>
            <person name="Chillingworth T."/>
            <person name="Churcher C.M."/>
            <person name="Collins M."/>
            <person name="Connor R."/>
            <person name="Cronin A."/>
            <person name="Davis P."/>
            <person name="Feltwell T."/>
            <person name="Fraser A."/>
            <person name="Gentles S."/>
            <person name="Goble A."/>
            <person name="Hamlin N."/>
            <person name="Harris D.E."/>
            <person name="Hidalgo J."/>
            <person name="Hodgson G."/>
            <person name="Holroyd S."/>
            <person name="Hornsby T."/>
            <person name="Howarth S."/>
            <person name="Huckle E.J."/>
            <person name="Hunt S."/>
            <person name="Jagels K."/>
            <person name="James K.D."/>
            <person name="Jones L."/>
            <person name="Jones M."/>
            <person name="Leather S."/>
            <person name="McDonald S."/>
            <person name="McLean J."/>
            <person name="Mooney P."/>
            <person name="Moule S."/>
            <person name="Mungall K.L."/>
            <person name="Murphy L.D."/>
            <person name="Niblett D."/>
            <person name="Odell C."/>
            <person name="Oliver K."/>
            <person name="O'Neil S."/>
            <person name="Pearson D."/>
            <person name="Quail M.A."/>
            <person name="Rabbinowitsch E."/>
            <person name="Rutherford K.M."/>
            <person name="Rutter S."/>
            <person name="Saunders D."/>
            <person name="Seeger K."/>
            <person name="Sharp S."/>
            <person name="Skelton J."/>
            <person name="Simmonds M.N."/>
            <person name="Squares R."/>
            <person name="Squares S."/>
            <person name="Stevens K."/>
            <person name="Taylor K."/>
            <person name="Taylor R.G."/>
            <person name="Tivey A."/>
            <person name="Walsh S.V."/>
            <person name="Warren T."/>
            <person name="Whitehead S."/>
            <person name="Woodward J.R."/>
            <person name="Volckaert G."/>
            <person name="Aert R."/>
            <person name="Robben J."/>
            <person name="Grymonprez B."/>
            <person name="Weltjens I."/>
            <person name="Vanstreels E."/>
            <person name="Rieger M."/>
            <person name="Schaefer M."/>
            <person name="Mueller-Auer S."/>
            <person name="Gabel C."/>
            <person name="Fuchs M."/>
            <person name="Duesterhoeft A."/>
            <person name="Fritzc C."/>
            <person name="Holzer E."/>
            <person name="Moestl D."/>
            <person name="Hilbert H."/>
            <person name="Borzym K."/>
            <person name="Langer I."/>
            <person name="Beck A."/>
            <person name="Lehrach H."/>
            <person name="Reinhardt R."/>
            <person name="Pohl T.M."/>
            <person name="Eger P."/>
            <person name="Zimmermann W."/>
            <person name="Wedler H."/>
            <person name="Wambutt R."/>
            <person name="Purnelle B."/>
            <person name="Goffeau A."/>
            <person name="Cadieu E."/>
            <person name="Dreano S."/>
            <person name="Gloux S."/>
            <person name="Lelaure V."/>
            <person name="Mottier S."/>
            <person name="Galibert F."/>
            <person name="Aves S.J."/>
            <person name="Xiang Z."/>
            <person name="Hunt C."/>
            <person name="Moore K."/>
            <person name="Hurst S.M."/>
            <person name="Lucas M."/>
            <person name="Rochet M."/>
            <person name="Gaillardin C."/>
            <person name="Tallada V.A."/>
            <person name="Garzon A."/>
            <person name="Thode G."/>
            <person name="Daga R.R."/>
            <person name="Cruzado L."/>
            <person name="Jimenez J."/>
            <person name="Sanchez M."/>
            <person name="del Rey F."/>
            <person name="Benito J."/>
            <person name="Dominguez A."/>
            <person name="Revuelta J.L."/>
            <person name="Moreno S."/>
            <person name="Armstrong J."/>
            <person name="Forsburg S.L."/>
            <person name="Cerutti L."/>
            <person name="Lowe T."/>
            <person name="McCombie W.R."/>
            <person name="Paulsen I."/>
            <person name="Potashkin J."/>
            <person name="Shpakovski G.V."/>
            <person name="Ussery D."/>
            <person name="Barrell B.G."/>
            <person name="Nurse P."/>
        </authorList>
    </citation>
    <scope>NUCLEOTIDE SEQUENCE [LARGE SCALE GENOMIC DNA]</scope>
    <source>
        <strain>972 / ATCC 24843</strain>
    </source>
</reference>
<evidence type="ECO:0000250" key="1"/>
<evidence type="ECO:0000255" key="2">
    <source>
        <dbReference type="PROSITE-ProRule" id="PRU01182"/>
    </source>
</evidence>
<evidence type="ECO:0000305" key="3"/>
<organism>
    <name type="scientific">Schizosaccharomyces pombe (strain 972 / ATCC 24843)</name>
    <name type="common">Fission yeast</name>
    <dbReference type="NCBI Taxonomy" id="284812"/>
    <lineage>
        <taxon>Eukaryota</taxon>
        <taxon>Fungi</taxon>
        <taxon>Dikarya</taxon>
        <taxon>Ascomycota</taxon>
        <taxon>Taphrinomycotina</taxon>
        <taxon>Schizosaccharomycetes</taxon>
        <taxon>Schizosaccharomycetales</taxon>
        <taxon>Schizosaccharomycetaceae</taxon>
        <taxon>Schizosaccharomyces</taxon>
    </lineage>
</organism>
<proteinExistence type="inferred from homology"/>
<name>RPN8_SCHPO</name>
<gene>
    <name type="primary">rpn8</name>
    <name type="ORF">SPCC1682.10</name>
</gene>
<accession>O74440</accession>
<comment type="function">
    <text evidence="1">Acts as a regulatory subunit of the 26S proteasome which is involved in the ATP-dependent degradation of ubiquitinated proteins.</text>
</comment>
<comment type="similarity">
    <text evidence="3">Belongs to the peptidase M67A family.</text>
</comment>
<protein>
    <recommendedName>
        <fullName>26S proteasome regulatory subunit rpn8</fullName>
    </recommendedName>
</protein>
<keyword id="KW-0647">Proteasome</keyword>
<keyword id="KW-1185">Reference proteome</keyword>
<dbReference type="EMBL" id="CU329672">
    <property type="protein sequence ID" value="CAA20676.1"/>
    <property type="molecule type" value="Genomic_DNA"/>
</dbReference>
<dbReference type="PIR" id="T41067">
    <property type="entry name" value="T41067"/>
</dbReference>
<dbReference type="RefSeq" id="NP_587803.1">
    <property type="nucleotide sequence ID" value="NM_001022796.2"/>
</dbReference>
<dbReference type="SMR" id="O74440"/>
<dbReference type="BioGRID" id="275489">
    <property type="interactions" value="11"/>
</dbReference>
<dbReference type="ComplexPortal" id="CPX-9077">
    <property type="entry name" value="26S proteasome complex"/>
</dbReference>
<dbReference type="FunCoup" id="O74440">
    <property type="interactions" value="465"/>
</dbReference>
<dbReference type="IntAct" id="O74440">
    <property type="interactions" value="1"/>
</dbReference>
<dbReference type="STRING" id="284812.O74440"/>
<dbReference type="MEROPS" id="M67.973"/>
<dbReference type="iPTMnet" id="O74440"/>
<dbReference type="PaxDb" id="4896-SPCC1682.10.1"/>
<dbReference type="EnsemblFungi" id="SPCC1682.10.1">
    <property type="protein sequence ID" value="SPCC1682.10.1:pep"/>
    <property type="gene ID" value="SPCC1682.10"/>
</dbReference>
<dbReference type="GeneID" id="2538912"/>
<dbReference type="KEGG" id="spo:2538912"/>
<dbReference type="PomBase" id="SPCC1682.10">
    <property type="gene designation" value="rpn8"/>
</dbReference>
<dbReference type="VEuPathDB" id="FungiDB:SPCC1682.10"/>
<dbReference type="eggNOG" id="KOG1556">
    <property type="taxonomic scope" value="Eukaryota"/>
</dbReference>
<dbReference type="HOGENOM" id="CLU_027018_3_0_1"/>
<dbReference type="InParanoid" id="O74440"/>
<dbReference type="OMA" id="HAMSIKT"/>
<dbReference type="PhylomeDB" id="O74440"/>
<dbReference type="Reactome" id="R-SPO-1236978">
    <property type="pathway name" value="Cross-presentation of soluble exogenous antigens (endosomes)"/>
</dbReference>
<dbReference type="Reactome" id="R-SPO-350562">
    <property type="pathway name" value="Regulation of ornithine decarboxylase (ODC)"/>
</dbReference>
<dbReference type="Reactome" id="R-SPO-5687128">
    <property type="pathway name" value="MAPK6/MAPK4 signaling"/>
</dbReference>
<dbReference type="Reactome" id="R-SPO-5689603">
    <property type="pathway name" value="UCH proteinases"/>
</dbReference>
<dbReference type="Reactome" id="R-SPO-5689880">
    <property type="pathway name" value="Ub-specific processing proteases"/>
</dbReference>
<dbReference type="Reactome" id="R-SPO-6798695">
    <property type="pathway name" value="Neutrophil degranulation"/>
</dbReference>
<dbReference type="Reactome" id="R-SPO-68949">
    <property type="pathway name" value="Orc1 removal from chromatin"/>
</dbReference>
<dbReference type="Reactome" id="R-SPO-69017">
    <property type="pathway name" value="CDK-mediated phosphorylation and removal of Cdc6"/>
</dbReference>
<dbReference type="Reactome" id="R-SPO-69601">
    <property type="pathway name" value="Ubiquitin Mediated Degradation of Phosphorylated Cdc25A"/>
</dbReference>
<dbReference type="Reactome" id="R-SPO-75815">
    <property type="pathway name" value="Ubiquitin-dependent degradation of Cyclin D"/>
</dbReference>
<dbReference type="Reactome" id="R-SPO-8854050">
    <property type="pathway name" value="FBXL7 down-regulates AURKA during mitotic entry and in early mitosis"/>
</dbReference>
<dbReference type="Reactome" id="R-SPO-8948751">
    <property type="pathway name" value="Regulation of PTEN stability and activity"/>
</dbReference>
<dbReference type="Reactome" id="R-SPO-8951664">
    <property type="pathway name" value="Neddylation"/>
</dbReference>
<dbReference type="Reactome" id="R-SPO-9755511">
    <property type="pathway name" value="KEAP1-NFE2L2 pathway"/>
</dbReference>
<dbReference type="Reactome" id="R-SPO-983168">
    <property type="pathway name" value="Antigen processing: Ubiquitination &amp; Proteasome degradation"/>
</dbReference>
<dbReference type="Reactome" id="R-SPO-9907900">
    <property type="pathway name" value="Proteasome assembly"/>
</dbReference>
<dbReference type="PRO" id="PR:O74440"/>
<dbReference type="Proteomes" id="UP000002485">
    <property type="component" value="Chromosome III"/>
</dbReference>
<dbReference type="GO" id="GO:0005829">
    <property type="term" value="C:cytosol"/>
    <property type="evidence" value="ECO:0007005"/>
    <property type="project" value="PomBase"/>
</dbReference>
<dbReference type="GO" id="GO:1990023">
    <property type="term" value="C:mitotic spindle midzone"/>
    <property type="evidence" value="ECO:0000314"/>
    <property type="project" value="PomBase"/>
</dbReference>
<dbReference type="GO" id="GO:0005635">
    <property type="term" value="C:nuclear envelope"/>
    <property type="evidence" value="ECO:0007005"/>
    <property type="project" value="PomBase"/>
</dbReference>
<dbReference type="GO" id="GO:0005634">
    <property type="term" value="C:nucleus"/>
    <property type="evidence" value="ECO:0007005"/>
    <property type="project" value="PomBase"/>
</dbReference>
<dbReference type="GO" id="GO:0000502">
    <property type="term" value="C:proteasome complex"/>
    <property type="evidence" value="ECO:0000318"/>
    <property type="project" value="GO_Central"/>
</dbReference>
<dbReference type="GO" id="GO:0008541">
    <property type="term" value="C:proteasome regulatory particle, lid subcomplex"/>
    <property type="evidence" value="ECO:0000314"/>
    <property type="project" value="PomBase"/>
</dbReference>
<dbReference type="GO" id="GO:0008237">
    <property type="term" value="F:metallopeptidase activity"/>
    <property type="evidence" value="ECO:0007669"/>
    <property type="project" value="InterPro"/>
</dbReference>
<dbReference type="GO" id="GO:0043161">
    <property type="term" value="P:proteasome-mediated ubiquitin-dependent protein catabolic process"/>
    <property type="evidence" value="ECO:0000318"/>
    <property type="project" value="GO_Central"/>
</dbReference>
<dbReference type="CDD" id="cd08062">
    <property type="entry name" value="MPN_RPN7_8"/>
    <property type="match status" value="1"/>
</dbReference>
<dbReference type="FunFam" id="3.40.140.10:FF:000004">
    <property type="entry name" value="26S proteasome regulatory subunit rpn-8"/>
    <property type="match status" value="1"/>
</dbReference>
<dbReference type="Gene3D" id="3.40.140.10">
    <property type="entry name" value="Cytidine Deaminase, domain 2"/>
    <property type="match status" value="1"/>
</dbReference>
<dbReference type="InterPro" id="IPR024969">
    <property type="entry name" value="EIF3F/CSN6-like_C"/>
</dbReference>
<dbReference type="InterPro" id="IPR000555">
    <property type="entry name" value="JAMM/MPN+_dom"/>
</dbReference>
<dbReference type="InterPro" id="IPR037518">
    <property type="entry name" value="MPN"/>
</dbReference>
<dbReference type="InterPro" id="IPR033858">
    <property type="entry name" value="MPN_RPN7_8"/>
</dbReference>
<dbReference type="PANTHER" id="PTHR10540:SF7">
    <property type="entry name" value="26S PROTEASOME NON-ATPASE REGULATORY SUBUNIT 7"/>
    <property type="match status" value="1"/>
</dbReference>
<dbReference type="PANTHER" id="PTHR10540">
    <property type="entry name" value="EUKARYOTIC TRANSLATION INITIATION FACTOR 3 SUBUNIT F-RELATED"/>
    <property type="match status" value="1"/>
</dbReference>
<dbReference type="Pfam" id="PF01398">
    <property type="entry name" value="JAB"/>
    <property type="match status" value="1"/>
</dbReference>
<dbReference type="Pfam" id="PF13012">
    <property type="entry name" value="MitMem_reg"/>
    <property type="match status" value="1"/>
</dbReference>
<dbReference type="SMART" id="SM00232">
    <property type="entry name" value="JAB_MPN"/>
    <property type="match status" value="1"/>
</dbReference>
<dbReference type="PROSITE" id="PS50249">
    <property type="entry name" value="MPN"/>
    <property type="match status" value="1"/>
</dbReference>
<sequence length="324" mass="35595">MPPAVSSETSTIVPQQVIVHPLVLLSAVDSYNRSAKGTKRRVVGILLGQNNGDVVNVANSYAIPFEEDEKNASVWFLDHNFMESMNEMFKKINANEKLVGWYHTGPQLRPSDLEINNLLKKYIPNPVLVIIDVKPKSVGLPTNAYFAIDEIEDDGSKSSRTFVHLPSSIEAEEAEEIGVEHLLRDTRDASVGTLATRVTQQAQSLQGLGQRLTEIADYLRKVVDGQLPINHAILAELQSVFNLLPNIFSGPVVSEQALESEAQRAFNVNSNDQLMSIYISSIVRAVIALHDLLDSLAASKAMEQQDIKPTVQNGEVSANAEQKA</sequence>
<feature type="chain" id="PRO_0000213950" description="26S proteasome regulatory subunit rpn8">
    <location>
        <begin position="1"/>
        <end position="324"/>
    </location>
</feature>
<feature type="domain" description="MPN" evidence="2">
    <location>
        <begin position="17"/>
        <end position="151"/>
    </location>
</feature>